<comment type="function">
    <text evidence="3 4">Integrin ITGAL/ITGB2 is a receptor for ICAM1, ICAM2, ICAM3 and ICAM4. Integrin ITGAL/ITGB2 is a receptor for F11R. Integrin ITGAL/ITGB2 is a receptor for the secreted form of ubiquitin-like protein ISG15; the interaction is mediated by ITGAL. Involved in a variety of immune phenomena including leukocyte-endothelial cell interaction, cytotoxic T-cell mediated killing, and antibody dependent killing by granulocytes and monocytes. Contributes to natural killer cell cytotoxicity. Involved in leukocyte adhesion and transmigration of leukocytes including T-cells and neutrophils. Acts as a platform at the immunological synapse to translate TCR engagement and density of the ITGAL ligand ICAM1 into graded adhesion. Required for generation of common lymphoid progenitor cells in bone marrow, indicating the role in lymphopoiesis. Integrin ITGAL/ITGB2 in association with ICAM3, contributes to apoptotic neutrophil phagocytosis by macrophages.</text>
</comment>
<comment type="subunit">
    <text evidence="3">Heterodimer of an alpha and a beta subunit. The ITGAL alpha subunit associates with the ITGB2 beta subunit. Interacts with THBD. Interacts with CD226.</text>
</comment>
<comment type="interaction">
    <interactant intactId="EBI-11616611">
        <id>P61625</id>
    </interactant>
    <interactant intactId="EBI-11580242">
        <id>Q7BHI8</id>
        <label>lktA</label>
    </interactant>
    <organismsDiffer>true</organismsDiffer>
    <experiments>2</experiments>
</comment>
<comment type="subcellular location">
    <subcellularLocation>
        <location evidence="3">Cell membrane</location>
        <topology evidence="5">Single-pass type I membrane protein</topology>
    </subcellularLocation>
    <text evidence="3">Upon antigen recognition by the TCR, is recruited to lipid rafts.</text>
</comment>
<comment type="domain">
    <text evidence="3">The integrin I-domain (insert) is a VWFA domain. Integrins with I-domains do not undergo protease cleavage. The I-domain is necessary and sufficient for interaction with ICAM1 and F11R.</text>
</comment>
<comment type="PTM">
    <text evidence="3">In resting T-cells, up to 40% of surface ITGAL is constitutively phosphorylated. Phosphorylation causes conformational changes needed for ligand binding and is necessary for the activation by some physiological agents.</text>
</comment>
<comment type="similarity">
    <text evidence="9">Belongs to the integrin alpha chain family.</text>
</comment>
<sequence length="1165" mass="128726">MNSCIIVLRLLLSGPFVFAPAWSYNLDVRHVQNFSFPLAGRHFGYRVLQVGNGVVVGAPSEGNSMGNLYQCQPETGDCLPVTLSSNYTSKYLGMTLATDPTSDNLLACDPGLSRTCDQNIYLSGLCYLIHENLRGPVLQGHPGYQECIKGNVDLVFLFDGSMSLQQDEFEKIVDFMKDVMKKLSNSSYQFAAVQFSTYFRTEFTFLDYIRQKDPDALLAGVKHMRLLTNTFGAINYVAKEVFRPDLGARPDATKVLIIITDGEATDEHNIDAAKDIIRYIIGIGKNFKTKESQEALHQFASKPVEEFVKILDTFEKLKDLFTELQKKIYVIEGTSKQDLTSFNMELSSSGISADLSEGHGVVGAVGAKDWAGGFLDLKADLKSSTFVGNEPLTVESRAGYLGYTVTWLPSRGTMSLLATGAPRYQHVGRVLLFQQPKRGGPWSQIQEIDGIQIGSYFGGELCGVDVDRDGETELLLIAAPLYYGEQRGGRVFIYQKIQLEFQMVSELQGETGYPLGRFGAAIAALTDINGDELTDVAVGAPLEEQGAVYIFNGQQGGLSPRPSQRIEGTQMFSGIQWFGRSIHGVKDLGGDGLADVAVGAEGQVIVLSSRPVVDIITSVSFSPAEIPVHEVECSYSTSNQKKEGVNLTVCFQVKSLISTFQGHLVANLTYTLQLDGHRTRSRGLFPGGKHKLIGNTAVTPVKSCFVFWFHFPICIQDLISPINVSLSYSLWEEEGTPRDPRALDRDIPPILKPSPHLETKEIPFEKNCGEDKNCEADLKLAFSDMRSKILRLTPSASLSVRLTLRNTAEDAYWVQVTLSFPQGLSFRKVEILKPHSHVPVGCEELPEEAVVHSRALSCNVSSPIFGEDSMVDIQVMFNTLQKGSWGDFIELQANVSCNNEDSSLLEDNSATTSIPVMYPINVLTKDQENSTLYISFTPKSPKIHHVKHIYQVRIQPSNYDNMPPLEALVRVPRVHSEGLITHKWSIQMEPPVNCSPRNLESPSDEAESCSFGTEFRCPIDFRQEILVQVNGMVELRGTIKASSMLSLCSSLAISFNSSKHFHLYGRNASMAQVVMKVDLVYEKEMLYLYVLSGIGGLLLLFLIFIALYKVGFFKRNLKEKMEANVDASSEIPGEDAGQPELEKECKDPGCLEPLQKTDEDGSGGD</sequence>
<name>ITAL_BOVIN</name>
<protein>
    <recommendedName>
        <fullName evidence="3">Integrin alpha-L</fullName>
    </recommendedName>
    <alternativeName>
        <fullName>CD11 antigen-like family member A</fullName>
    </alternativeName>
    <alternativeName>
        <fullName>Leukocyte adhesion glycoprotein LFA-1 alpha chain</fullName>
        <shortName>LFA-1A</shortName>
    </alternativeName>
    <alternativeName>
        <fullName>Leukocyte function-associated molecule 1 alpha chain</fullName>
    </alternativeName>
    <cdAntigenName>CD11a</cdAntigenName>
</protein>
<organism>
    <name type="scientific">Bos taurus</name>
    <name type="common">Bovine</name>
    <dbReference type="NCBI Taxonomy" id="9913"/>
    <lineage>
        <taxon>Eukaryota</taxon>
        <taxon>Metazoa</taxon>
        <taxon>Chordata</taxon>
        <taxon>Craniata</taxon>
        <taxon>Vertebrata</taxon>
        <taxon>Euteleostomi</taxon>
        <taxon>Mammalia</taxon>
        <taxon>Eutheria</taxon>
        <taxon>Laurasiatheria</taxon>
        <taxon>Artiodactyla</taxon>
        <taxon>Ruminantia</taxon>
        <taxon>Pecora</taxon>
        <taxon>Bovidae</taxon>
        <taxon>Bovinae</taxon>
        <taxon>Bos</taxon>
    </lineage>
</organism>
<keyword id="KW-0106">Calcium</keyword>
<keyword id="KW-0130">Cell adhesion</keyword>
<keyword id="KW-1003">Cell membrane</keyword>
<keyword id="KW-1015">Disulfide bond</keyword>
<keyword id="KW-0325">Glycoprotein</keyword>
<keyword id="KW-0401">Integrin</keyword>
<keyword id="KW-0460">Magnesium</keyword>
<keyword id="KW-0472">Membrane</keyword>
<keyword id="KW-0479">Metal-binding</keyword>
<keyword id="KW-0581">Phagocytosis</keyword>
<keyword id="KW-0597">Phosphoprotein</keyword>
<keyword id="KW-0675">Receptor</keyword>
<keyword id="KW-1185">Reference proteome</keyword>
<keyword id="KW-0677">Repeat</keyword>
<keyword id="KW-0732">Signal</keyword>
<keyword id="KW-0812">Transmembrane</keyword>
<keyword id="KW-1133">Transmembrane helix</keyword>
<accession>P61625</accession>
<accession>Q6TYB8</accession>
<gene>
    <name evidence="3" type="primary">ITGAL</name>
</gene>
<feature type="signal peptide" evidence="5">
    <location>
        <begin position="1"/>
        <end position="23"/>
    </location>
</feature>
<feature type="chain" id="PRO_0000016291" description="Integrin alpha-L">
    <location>
        <begin position="24"/>
        <end position="1165"/>
    </location>
</feature>
<feature type="topological domain" description="Extracellular" evidence="5">
    <location>
        <begin position="24"/>
        <end position="1084"/>
    </location>
</feature>
<feature type="transmembrane region" description="Helical" evidence="5">
    <location>
        <begin position="1085"/>
        <end position="1105"/>
    </location>
</feature>
<feature type="topological domain" description="Cytoplasmic" evidence="5">
    <location>
        <begin position="1106"/>
        <end position="1165"/>
    </location>
</feature>
<feature type="repeat" description="FG-GAP 1" evidence="7">
    <location>
        <begin position="29"/>
        <end position="80"/>
    </location>
</feature>
<feature type="repeat" description="FG-GAP 2" evidence="7">
    <location>
        <begin position="81"/>
        <end position="138"/>
    </location>
</feature>
<feature type="domain" description="VWFA" evidence="6">
    <location>
        <begin position="153"/>
        <end position="324"/>
    </location>
</feature>
<feature type="repeat" description="FG-GAP 3" evidence="7">
    <location>
        <begin position="335"/>
        <end position="386"/>
    </location>
</feature>
<feature type="repeat" description="FG-GAP 4" evidence="7">
    <location>
        <begin position="387"/>
        <end position="442"/>
    </location>
</feature>
<feature type="repeat" description="FG-GAP 5" evidence="7">
    <location>
        <begin position="443"/>
        <end position="503"/>
    </location>
</feature>
<feature type="repeat" description="FG-GAP 6" evidence="7">
    <location>
        <begin position="504"/>
        <end position="560"/>
    </location>
</feature>
<feature type="repeat" description="FG-GAP 7" evidence="7">
    <location>
        <begin position="564"/>
        <end position="624"/>
    </location>
</feature>
<feature type="region of interest" description="Disordered" evidence="8">
    <location>
        <begin position="1123"/>
        <end position="1165"/>
    </location>
</feature>
<feature type="short sequence motif" description="GFFKR motif">
    <location>
        <begin position="1111"/>
        <end position="1115"/>
    </location>
</feature>
<feature type="compositionally biased region" description="Basic and acidic residues" evidence="8">
    <location>
        <begin position="1140"/>
        <end position="1159"/>
    </location>
</feature>
<feature type="binding site" evidence="2">
    <location>
        <position position="465"/>
    </location>
    <ligand>
        <name>Ca(2+)</name>
        <dbReference type="ChEBI" id="CHEBI:29108"/>
        <label>1</label>
    </ligand>
</feature>
<feature type="binding site" evidence="2">
    <location>
        <position position="467"/>
    </location>
    <ligand>
        <name>Ca(2+)</name>
        <dbReference type="ChEBI" id="CHEBI:29108"/>
        <label>1</label>
    </ligand>
</feature>
<feature type="binding site" evidence="2">
    <location>
        <position position="469"/>
    </location>
    <ligand>
        <name>Ca(2+)</name>
        <dbReference type="ChEBI" id="CHEBI:29108"/>
        <label>1</label>
    </ligand>
</feature>
<feature type="binding site" evidence="2">
    <location>
        <position position="473"/>
    </location>
    <ligand>
        <name>Ca(2+)</name>
        <dbReference type="ChEBI" id="CHEBI:29108"/>
        <label>1</label>
    </ligand>
</feature>
<feature type="binding site" evidence="2">
    <location>
        <position position="527"/>
    </location>
    <ligand>
        <name>Ca(2+)</name>
        <dbReference type="ChEBI" id="CHEBI:29108"/>
        <label>2</label>
    </ligand>
</feature>
<feature type="binding site" evidence="2">
    <location>
        <position position="529"/>
    </location>
    <ligand>
        <name>Ca(2+)</name>
        <dbReference type="ChEBI" id="CHEBI:29108"/>
        <label>2</label>
    </ligand>
</feature>
<feature type="binding site" evidence="2">
    <location>
        <position position="531"/>
    </location>
    <ligand>
        <name>Ca(2+)</name>
        <dbReference type="ChEBI" id="CHEBI:29108"/>
        <label>2</label>
    </ligand>
</feature>
<feature type="binding site" evidence="2">
    <location>
        <position position="535"/>
    </location>
    <ligand>
        <name>Ca(2+)</name>
        <dbReference type="ChEBI" id="CHEBI:29108"/>
        <label>2</label>
    </ligand>
</feature>
<feature type="binding site" evidence="2">
    <location>
        <position position="587"/>
    </location>
    <ligand>
        <name>Ca(2+)</name>
        <dbReference type="ChEBI" id="CHEBI:29108"/>
        <label>3</label>
    </ligand>
</feature>
<feature type="binding site" evidence="2">
    <location>
        <position position="591"/>
    </location>
    <ligand>
        <name>Ca(2+)</name>
        <dbReference type="ChEBI" id="CHEBI:29108"/>
        <label>3</label>
    </ligand>
</feature>
<feature type="binding site" evidence="2">
    <location>
        <position position="595"/>
    </location>
    <ligand>
        <name>Ca(2+)</name>
        <dbReference type="ChEBI" id="CHEBI:29108"/>
        <label>3</label>
    </ligand>
</feature>
<feature type="glycosylation site" description="N-linked (GlcNAc...) asparagine" evidence="5">
    <location>
        <position position="33"/>
    </location>
</feature>
<feature type="glycosylation site" description="N-linked (GlcNAc...) asparagine" evidence="5">
    <location>
        <position position="86"/>
    </location>
</feature>
<feature type="glycosylation site" description="N-linked (GlcNAc...) asparagine" evidence="5">
    <location>
        <position position="185"/>
    </location>
</feature>
<feature type="glycosylation site" description="N-linked (GlcNAc...) asparagine" evidence="5">
    <location>
        <position position="646"/>
    </location>
</feature>
<feature type="glycosylation site" description="N-linked (GlcNAc...) asparagine" evidence="5">
    <location>
        <position position="667"/>
    </location>
</feature>
<feature type="glycosylation site" description="N-linked (GlcNAc...) asparagine" evidence="5">
    <location>
        <position position="723"/>
    </location>
</feature>
<feature type="glycosylation site" description="N-linked (GlcNAc...) asparagine" evidence="5">
    <location>
        <position position="859"/>
    </location>
</feature>
<feature type="glycosylation site" description="N-linked (GlcNAc...) asparagine" evidence="5">
    <location>
        <position position="894"/>
    </location>
</feature>
<feature type="glycosylation site" description="N-linked (GlcNAc...) asparagine" evidence="5">
    <location>
        <position position="929"/>
    </location>
</feature>
<feature type="glycosylation site" description="N-linked (GlcNAc...) asparagine" evidence="5">
    <location>
        <position position="1056"/>
    </location>
</feature>
<feature type="glycosylation site" description="N-linked (GlcNAc...) asparagine" evidence="5">
    <location>
        <position position="1067"/>
    </location>
</feature>
<feature type="disulfide bond" evidence="1">
    <location>
        <begin position="71"/>
        <end position="78"/>
    </location>
</feature>
<feature type="disulfide bond" evidence="1">
    <location>
        <begin position="108"/>
        <end position="126"/>
    </location>
</feature>
<feature type="disulfide bond" evidence="1">
    <location>
        <begin position="650"/>
        <end position="704"/>
    </location>
</feature>
<feature type="disulfide bond" evidence="1">
    <location>
        <begin position="768"/>
        <end position="774"/>
    </location>
</feature>
<feature type="disulfide bond" evidence="1">
    <location>
        <begin position="842"/>
        <end position="858"/>
    </location>
</feature>
<feature type="disulfide bond" evidence="1">
    <location>
        <begin position="994"/>
        <end position="1009"/>
    </location>
</feature>
<feature type="disulfide bond" evidence="1">
    <location>
        <begin position="1017"/>
        <end position="1048"/>
    </location>
</feature>
<dbReference type="EMBL" id="AY267467">
    <property type="protein sequence ID" value="AAP94035.1"/>
    <property type="molecule type" value="mRNA"/>
</dbReference>
<dbReference type="EMBL" id="AY382558">
    <property type="protein sequence ID" value="AAQ90015.2"/>
    <property type="molecule type" value="mRNA"/>
</dbReference>
<dbReference type="RefSeq" id="NP_937864.2">
    <property type="nucleotide sequence ID" value="NM_198221.2"/>
</dbReference>
<dbReference type="RefSeq" id="XP_015315850.1">
    <property type="nucleotide sequence ID" value="XM_015460364.1"/>
</dbReference>
<dbReference type="SMR" id="P61625"/>
<dbReference type="FunCoup" id="P61625">
    <property type="interactions" value="875"/>
</dbReference>
<dbReference type="IntAct" id="P61625">
    <property type="interactions" value="1"/>
</dbReference>
<dbReference type="STRING" id="9913.ENSBTAP00000009348"/>
<dbReference type="GlyCosmos" id="P61625">
    <property type="glycosylation" value="11 sites, No reported glycans"/>
</dbReference>
<dbReference type="GlyGen" id="P61625">
    <property type="glycosylation" value="11 sites"/>
</dbReference>
<dbReference type="PaxDb" id="9913-ENSBTAP00000009348"/>
<dbReference type="Ensembl" id="ENSBTAT00000009348.7">
    <property type="protein sequence ID" value="ENSBTAP00000009348.6"/>
    <property type="gene ID" value="ENSBTAG00000007103.7"/>
</dbReference>
<dbReference type="GeneID" id="281874"/>
<dbReference type="KEGG" id="bta:281874"/>
<dbReference type="CTD" id="3683"/>
<dbReference type="VEuPathDB" id="HostDB:ENSBTAG00000007103"/>
<dbReference type="VGNC" id="VGNC:30322">
    <property type="gene designation" value="ITGAL"/>
</dbReference>
<dbReference type="eggNOG" id="KOG3637">
    <property type="taxonomic scope" value="Eukaryota"/>
</dbReference>
<dbReference type="GeneTree" id="ENSGT00940000161495"/>
<dbReference type="InParanoid" id="P61625"/>
<dbReference type="OMA" id="TVCFQLK"/>
<dbReference type="OrthoDB" id="5317514at2759"/>
<dbReference type="Reactome" id="R-BTA-198933">
    <property type="pathway name" value="Immunoregulatory interactions between a Lymphoid and a non-Lymphoid cell"/>
</dbReference>
<dbReference type="Reactome" id="R-BTA-202733">
    <property type="pathway name" value="Cell surface interactions at the vascular wall"/>
</dbReference>
<dbReference type="Reactome" id="R-BTA-216083">
    <property type="pathway name" value="Integrin cell surface interactions"/>
</dbReference>
<dbReference type="Reactome" id="R-BTA-6798695">
    <property type="pathway name" value="Neutrophil degranulation"/>
</dbReference>
<dbReference type="Proteomes" id="UP000009136">
    <property type="component" value="Chromosome 25"/>
</dbReference>
<dbReference type="Bgee" id="ENSBTAG00000007103">
    <property type="expression patterns" value="Expressed in mesenteric lymph node and 104 other cell types or tissues"/>
</dbReference>
<dbReference type="GO" id="GO:0009897">
    <property type="term" value="C:external side of plasma membrane"/>
    <property type="evidence" value="ECO:0000318"/>
    <property type="project" value="GO_Central"/>
</dbReference>
<dbReference type="GO" id="GO:0034687">
    <property type="term" value="C:integrin alphaL-beta2 complex"/>
    <property type="evidence" value="ECO:0007669"/>
    <property type="project" value="Ensembl"/>
</dbReference>
<dbReference type="GO" id="GO:0008305">
    <property type="term" value="C:integrin complex"/>
    <property type="evidence" value="ECO:0000318"/>
    <property type="project" value="GO_Central"/>
</dbReference>
<dbReference type="GO" id="GO:0030369">
    <property type="term" value="F:ICAM-3 receptor activity"/>
    <property type="evidence" value="ECO:0007669"/>
    <property type="project" value="Ensembl"/>
</dbReference>
<dbReference type="GO" id="GO:0005178">
    <property type="term" value="F:integrin binding"/>
    <property type="evidence" value="ECO:0000318"/>
    <property type="project" value="GO_Central"/>
</dbReference>
<dbReference type="GO" id="GO:0046872">
    <property type="term" value="F:metal ion binding"/>
    <property type="evidence" value="ECO:0007669"/>
    <property type="project" value="UniProtKB-KW"/>
</dbReference>
<dbReference type="GO" id="GO:0033627">
    <property type="term" value="P:cell adhesion mediated by integrin"/>
    <property type="evidence" value="ECO:0000318"/>
    <property type="project" value="GO_Central"/>
</dbReference>
<dbReference type="GO" id="GO:0098609">
    <property type="term" value="P:cell-cell adhesion"/>
    <property type="evidence" value="ECO:0000318"/>
    <property type="project" value="GO_Central"/>
</dbReference>
<dbReference type="GO" id="GO:0007160">
    <property type="term" value="P:cell-matrix adhesion"/>
    <property type="evidence" value="ECO:0007669"/>
    <property type="project" value="Ensembl"/>
</dbReference>
<dbReference type="GO" id="GO:0007157">
    <property type="term" value="P:heterophilic cell-cell adhesion via plasma membrane cell adhesion molecules"/>
    <property type="evidence" value="ECO:0007669"/>
    <property type="project" value="Ensembl"/>
</dbReference>
<dbReference type="GO" id="GO:0007229">
    <property type="term" value="P:integrin-mediated signaling pathway"/>
    <property type="evidence" value="ECO:0000318"/>
    <property type="project" value="GO_Central"/>
</dbReference>
<dbReference type="GO" id="GO:0007159">
    <property type="term" value="P:leukocyte cell-cell adhesion"/>
    <property type="evidence" value="ECO:0007669"/>
    <property type="project" value="Ensembl"/>
</dbReference>
<dbReference type="GO" id="GO:0035683">
    <property type="term" value="P:memory T cell extravasation"/>
    <property type="evidence" value="ECO:0007669"/>
    <property type="project" value="Ensembl"/>
</dbReference>
<dbReference type="GO" id="GO:0006909">
    <property type="term" value="P:phagocytosis"/>
    <property type="evidence" value="ECO:0007669"/>
    <property type="project" value="UniProtKB-KW"/>
</dbReference>
<dbReference type="GO" id="GO:0043113">
    <property type="term" value="P:receptor clustering"/>
    <property type="evidence" value="ECO:0007669"/>
    <property type="project" value="Ensembl"/>
</dbReference>
<dbReference type="GO" id="GO:0002291">
    <property type="term" value="P:T cell activation via T cell receptor contact with antigen bound to MHC molecule on antigen presenting cell"/>
    <property type="evidence" value="ECO:0007669"/>
    <property type="project" value="Ensembl"/>
</dbReference>
<dbReference type="FunFam" id="2.130.10.130:FF:000009">
    <property type="entry name" value="Alpha L integrin"/>
    <property type="match status" value="1"/>
</dbReference>
<dbReference type="FunFam" id="2.60.40.1460:FF:000001">
    <property type="entry name" value="Integrin, alpha V"/>
    <property type="match status" value="1"/>
</dbReference>
<dbReference type="Gene3D" id="1.20.5.2120">
    <property type="match status" value="1"/>
</dbReference>
<dbReference type="Gene3D" id="1.20.5.930">
    <property type="entry name" value="Bicelle-embedded integrin alpha(iib) transmembrane segment"/>
    <property type="match status" value="1"/>
</dbReference>
<dbReference type="Gene3D" id="2.130.10.130">
    <property type="entry name" value="Integrin alpha, N-terminal"/>
    <property type="match status" value="2"/>
</dbReference>
<dbReference type="Gene3D" id="2.60.40.1460">
    <property type="entry name" value="Integrin domains. Chain A, domain 2"/>
    <property type="match status" value="1"/>
</dbReference>
<dbReference type="Gene3D" id="2.60.40.1510">
    <property type="entry name" value="ntegrin, alpha v. Chain A, domain 3"/>
    <property type="match status" value="1"/>
</dbReference>
<dbReference type="Gene3D" id="2.60.40.1530">
    <property type="entry name" value="ntegrin, alpha v. Chain A, domain 4"/>
    <property type="match status" value="1"/>
</dbReference>
<dbReference type="InterPro" id="IPR013517">
    <property type="entry name" value="FG-GAP"/>
</dbReference>
<dbReference type="InterPro" id="IPR013519">
    <property type="entry name" value="Int_alpha_beta-p"/>
</dbReference>
<dbReference type="InterPro" id="IPR000413">
    <property type="entry name" value="Integrin_alpha"/>
</dbReference>
<dbReference type="InterPro" id="IPR018184">
    <property type="entry name" value="Integrin_alpha_C_CS"/>
</dbReference>
<dbReference type="InterPro" id="IPR013649">
    <property type="entry name" value="Integrin_alpha_Ig-like_1"/>
</dbReference>
<dbReference type="InterPro" id="IPR048285">
    <property type="entry name" value="Integrin_alpha_Ig-like_2"/>
</dbReference>
<dbReference type="InterPro" id="IPR028994">
    <property type="entry name" value="Integrin_alpha_N"/>
</dbReference>
<dbReference type="InterPro" id="IPR032695">
    <property type="entry name" value="Integrin_dom_sf"/>
</dbReference>
<dbReference type="InterPro" id="IPR002035">
    <property type="entry name" value="VWF_A"/>
</dbReference>
<dbReference type="InterPro" id="IPR036465">
    <property type="entry name" value="vWFA_dom_sf"/>
</dbReference>
<dbReference type="PANTHER" id="PTHR23220">
    <property type="entry name" value="INTEGRIN ALPHA"/>
    <property type="match status" value="1"/>
</dbReference>
<dbReference type="PANTHER" id="PTHR23220:SF84">
    <property type="entry name" value="INTEGRIN ALPHA-L"/>
    <property type="match status" value="1"/>
</dbReference>
<dbReference type="Pfam" id="PF01839">
    <property type="entry name" value="FG-GAP"/>
    <property type="match status" value="2"/>
</dbReference>
<dbReference type="Pfam" id="PF08441">
    <property type="entry name" value="Integrin_A_Ig_1"/>
    <property type="match status" value="1"/>
</dbReference>
<dbReference type="Pfam" id="PF20805">
    <property type="entry name" value="Integrin_A_Ig_2"/>
    <property type="match status" value="1"/>
</dbReference>
<dbReference type="Pfam" id="PF00357">
    <property type="entry name" value="Integrin_alpha"/>
    <property type="match status" value="1"/>
</dbReference>
<dbReference type="Pfam" id="PF00092">
    <property type="entry name" value="VWA"/>
    <property type="match status" value="1"/>
</dbReference>
<dbReference type="PRINTS" id="PR01185">
    <property type="entry name" value="INTEGRINA"/>
</dbReference>
<dbReference type="PRINTS" id="PR00453">
    <property type="entry name" value="VWFADOMAIN"/>
</dbReference>
<dbReference type="SMART" id="SM00191">
    <property type="entry name" value="Int_alpha"/>
    <property type="match status" value="5"/>
</dbReference>
<dbReference type="SMART" id="SM00327">
    <property type="entry name" value="VWA"/>
    <property type="match status" value="1"/>
</dbReference>
<dbReference type="SUPFAM" id="SSF69318">
    <property type="entry name" value="Integrin alpha N-terminal domain"/>
    <property type="match status" value="1"/>
</dbReference>
<dbReference type="SUPFAM" id="SSF69179">
    <property type="entry name" value="Integrin domains"/>
    <property type="match status" value="2"/>
</dbReference>
<dbReference type="SUPFAM" id="SSF53300">
    <property type="entry name" value="vWA-like"/>
    <property type="match status" value="1"/>
</dbReference>
<dbReference type="PROSITE" id="PS51470">
    <property type="entry name" value="FG_GAP"/>
    <property type="match status" value="7"/>
</dbReference>
<dbReference type="PROSITE" id="PS00242">
    <property type="entry name" value="INTEGRIN_ALPHA"/>
    <property type="match status" value="1"/>
</dbReference>
<dbReference type="PROSITE" id="PS50234">
    <property type="entry name" value="VWFA"/>
    <property type="match status" value="1"/>
</dbReference>
<evidence type="ECO:0000250" key="1"/>
<evidence type="ECO:0000250" key="2">
    <source>
        <dbReference type="UniProtKB" id="P08648"/>
    </source>
</evidence>
<evidence type="ECO:0000250" key="3">
    <source>
        <dbReference type="UniProtKB" id="P20701"/>
    </source>
</evidence>
<evidence type="ECO:0000250" key="4">
    <source>
        <dbReference type="UniProtKB" id="P24063"/>
    </source>
</evidence>
<evidence type="ECO:0000255" key="5"/>
<evidence type="ECO:0000255" key="6">
    <source>
        <dbReference type="PROSITE-ProRule" id="PRU00219"/>
    </source>
</evidence>
<evidence type="ECO:0000255" key="7">
    <source>
        <dbReference type="PROSITE-ProRule" id="PRU00803"/>
    </source>
</evidence>
<evidence type="ECO:0000256" key="8">
    <source>
        <dbReference type="SAM" id="MobiDB-lite"/>
    </source>
</evidence>
<evidence type="ECO:0000305" key="9"/>
<reference key="1">
    <citation type="journal article" date="2004" name="Gene">
        <title>The bovine (Bos taurus) CD11a-encoding cDNA: molecular cloning, characterisation and comparison with the human and murine glycoproteins.</title>
        <authorList>
            <person name="Fett T."/>
            <person name="Zecchinon L."/>
            <person name="Baise E."/>
            <person name="Desmecht D."/>
        </authorList>
    </citation>
    <scope>NUCLEOTIDE SEQUENCE [MRNA]</scope>
</reference>
<reference key="2">
    <citation type="journal article" date="2005" name="Microb. Pathog.">
        <title>Recombinant expression of bovine LFA-1 and characterization of its role as a receptor for Mannheimia haemolytica leukotoxin.</title>
        <authorList>
            <person name="Dileepan T."/>
            <person name="Thumbikat P."/>
            <person name="Walcheck B."/>
            <person name="Kannan M.S."/>
            <person name="Maheswaran S.K."/>
        </authorList>
    </citation>
    <scope>NUCLEOTIDE SEQUENCE [MRNA]</scope>
</reference>
<proteinExistence type="evidence at protein level"/>